<evidence type="ECO:0000250" key="1"/>
<evidence type="ECO:0000255" key="2"/>
<evidence type="ECO:0000305" key="3"/>
<reference key="1">
    <citation type="journal article" date="2007" name="Nat. Biotechnol.">
        <title>Comparative analysis of the complete genome sequence of the plant growth-promoting bacterium Bacillus amyloliquefaciens FZB42.</title>
        <authorList>
            <person name="Chen X.H."/>
            <person name="Koumoutsi A."/>
            <person name="Scholz R."/>
            <person name="Eisenreich A."/>
            <person name="Schneider K."/>
            <person name="Heinemeyer I."/>
            <person name="Morgenstern B."/>
            <person name="Voss B."/>
            <person name="Hess W.R."/>
            <person name="Reva O."/>
            <person name="Junge H."/>
            <person name="Voigt B."/>
            <person name="Jungblut P.R."/>
            <person name="Vater J."/>
            <person name="Suessmuth R."/>
            <person name="Liesegang H."/>
            <person name="Strittmatter A."/>
            <person name="Gottschalk G."/>
            <person name="Borriss R."/>
        </authorList>
    </citation>
    <scope>NUCLEOTIDE SEQUENCE [LARGE SCALE GENOMIC DNA]</scope>
    <source>
        <strain>DSM 23117 / BGSC 10A6 / LMG 26770 / FZB42</strain>
    </source>
</reference>
<gene>
    <name type="ordered locus">RBAM_010020</name>
</gene>
<proteinExistence type="inferred from homology"/>
<name>Y1002_BACVZ</name>
<organism>
    <name type="scientific">Bacillus velezensis (strain DSM 23117 / BGSC 10A6 / LMG 26770 / FZB42)</name>
    <name type="common">Bacillus amyloliquefaciens subsp. plantarum</name>
    <dbReference type="NCBI Taxonomy" id="326423"/>
    <lineage>
        <taxon>Bacteria</taxon>
        <taxon>Bacillati</taxon>
        <taxon>Bacillota</taxon>
        <taxon>Bacilli</taxon>
        <taxon>Bacillales</taxon>
        <taxon>Bacillaceae</taxon>
        <taxon>Bacillus</taxon>
        <taxon>Bacillus amyloliquefaciens group</taxon>
    </lineage>
</organism>
<sequence length="377" mass="42883">MGIAGTFLFMIVIGAAIGAVTNHLAIQMLFRPYRPYYLFGKRVPFTPGLIPKRRDELAKQMGLMVTNHLLTPEGIKKRLLSDTVKNQALLFAEQFTQKMAASEMTVHEALAAAGILNPQEKTDAWIDRFTDEKLSELYRKYEHRAIKDWLPDELQEKLDEKVPLAADYILKRSTDYFESEEGKDRLGNMIDDFLNSRGMLGSMVQMFLGNSSLADRVLPELLKFLRNEETKKLLADLLSQEWGKLKSYTLYEADEKWNAKDLLFSMKKRALAALQTAPFFECRLGDIISRYEGEITGTYAPKLLDAALGSIAAHLEDVLKRLRLEEVVKEQVDQFPVERLEEMVLSISKREFKMITYLGGLLGGIIGAIQALFVILF</sequence>
<accession>A7Z2Z0</accession>
<dbReference type="EMBL" id="CP000560">
    <property type="protein sequence ID" value="ABS73366.1"/>
    <property type="molecule type" value="Genomic_DNA"/>
</dbReference>
<dbReference type="RefSeq" id="WP_012117193.1">
    <property type="nucleotide sequence ID" value="NC_009725.2"/>
</dbReference>
<dbReference type="SMR" id="A7Z2Z0"/>
<dbReference type="GeneID" id="93080136"/>
<dbReference type="KEGG" id="bay:RBAM_010020"/>
<dbReference type="HOGENOM" id="CLU_042384_0_0_9"/>
<dbReference type="Proteomes" id="UP000001120">
    <property type="component" value="Chromosome"/>
</dbReference>
<dbReference type="GO" id="GO:0005886">
    <property type="term" value="C:plasma membrane"/>
    <property type="evidence" value="ECO:0007669"/>
    <property type="project" value="UniProtKB-SubCell"/>
</dbReference>
<dbReference type="InterPro" id="IPR007383">
    <property type="entry name" value="DUF445"/>
</dbReference>
<dbReference type="InterPro" id="IPR016991">
    <property type="entry name" value="UCP032178"/>
</dbReference>
<dbReference type="PANTHER" id="PTHR35791">
    <property type="entry name" value="UPF0754 MEMBRANE PROTEIN YHEB"/>
    <property type="match status" value="1"/>
</dbReference>
<dbReference type="PANTHER" id="PTHR35791:SF1">
    <property type="entry name" value="UPF0754 MEMBRANE PROTEIN YHEB"/>
    <property type="match status" value="1"/>
</dbReference>
<dbReference type="Pfam" id="PF04286">
    <property type="entry name" value="DUF445"/>
    <property type="match status" value="1"/>
</dbReference>
<dbReference type="PIRSF" id="PIRSF032178">
    <property type="entry name" value="UCP032178"/>
    <property type="match status" value="1"/>
</dbReference>
<protein>
    <recommendedName>
        <fullName>UPF0754 membrane protein RBAM_010020</fullName>
    </recommendedName>
</protein>
<comment type="subcellular location">
    <subcellularLocation>
        <location evidence="1">Cell membrane</location>
        <topology evidence="1">Multi-pass membrane protein</topology>
    </subcellularLocation>
</comment>
<comment type="similarity">
    <text evidence="3">Belongs to the UPF0754 family.</text>
</comment>
<feature type="chain" id="PRO_0000388264" description="UPF0754 membrane protein RBAM_010020">
    <location>
        <begin position="1"/>
        <end position="377"/>
    </location>
</feature>
<feature type="transmembrane region" description="Helical" evidence="2">
    <location>
        <begin position="1"/>
        <end position="21"/>
    </location>
</feature>
<feature type="transmembrane region" description="Helical" evidence="2">
    <location>
        <begin position="357"/>
        <end position="377"/>
    </location>
</feature>
<keyword id="KW-1003">Cell membrane</keyword>
<keyword id="KW-0472">Membrane</keyword>
<keyword id="KW-0812">Transmembrane</keyword>
<keyword id="KW-1133">Transmembrane helix</keyword>